<proteinExistence type="evidence at protein level"/>
<name>AT1B4_CHICK</name>
<sequence>MEPGMEMNTASEGGTRRGPENKHEEKVQDPNRGEAETKAEMGNKTWADLAGEMKTFLWNPEERTCMGRTAKSWGLILLFYFIFYTCLAGMFAFCMYVMLLTLSPYTPTYRDRVSPPGVMIRPYLNGFTIAFNVSKPSTWQPYVDSMHQFLAAYDDKVQEEKNIECISGQYFIQGGNDSEEKKACQFKRSLLQNCSGIEDPTFGFSKGQPCILLKMNRIIGYRPGAGVPVNVDCKVQKGNESDLRSVDFYPGNGTFDLMYYPYYGKLTHVNYTSPLVAMHFTDVKRNSLVHIQCKLNGKGIINDVNSDRFLGRIIFTLSIGK</sequence>
<keyword id="KW-1015">Disulfide bond</keyword>
<keyword id="KW-0325">Glycoprotein</keyword>
<keyword id="KW-0375">Hydrogen ion transport</keyword>
<keyword id="KW-0406">Ion transport</keyword>
<keyword id="KW-0472">Membrane</keyword>
<keyword id="KW-1185">Reference proteome</keyword>
<keyword id="KW-0735">Signal-anchor</keyword>
<keyword id="KW-0812">Transmembrane</keyword>
<keyword id="KW-1133">Transmembrane helix</keyword>
<keyword id="KW-0813">Transport</keyword>
<dbReference type="EMBL" id="DQ358914">
    <property type="protein sequence ID" value="ABC94911.1"/>
    <property type="molecule type" value="mRNA"/>
</dbReference>
<dbReference type="RefSeq" id="NP_001038116.1">
    <property type="nucleotide sequence ID" value="NM_001044651.2"/>
</dbReference>
<dbReference type="SMR" id="Q2HZ96"/>
<dbReference type="BioGRID" id="683057">
    <property type="interactions" value="2"/>
</dbReference>
<dbReference type="FunCoup" id="Q2HZ96">
    <property type="interactions" value="59"/>
</dbReference>
<dbReference type="STRING" id="9031.ENSGALP00000038293"/>
<dbReference type="GlyCosmos" id="Q2HZ96">
    <property type="glycosylation" value="6 sites, No reported glycans"/>
</dbReference>
<dbReference type="GlyGen" id="Q2HZ96">
    <property type="glycosylation" value="6 sites"/>
</dbReference>
<dbReference type="PaxDb" id="9031-ENSGALP00000038293"/>
<dbReference type="Ensembl" id="ENSGALT00010030575.1">
    <property type="protein sequence ID" value="ENSGALP00010017738.1"/>
    <property type="gene ID" value="ENSGALG00010012759.1"/>
</dbReference>
<dbReference type="GeneID" id="422365"/>
<dbReference type="KEGG" id="gga:422365"/>
<dbReference type="CTD" id="23439"/>
<dbReference type="VEuPathDB" id="HostDB:geneid_422365"/>
<dbReference type="eggNOG" id="KOG3927">
    <property type="taxonomic scope" value="Eukaryota"/>
</dbReference>
<dbReference type="GeneTree" id="ENSGT01030000234579"/>
<dbReference type="HOGENOM" id="CLU_057702_1_1_1"/>
<dbReference type="InParanoid" id="Q2HZ96"/>
<dbReference type="OMA" id="FGGCMFC"/>
<dbReference type="OrthoDB" id="5912413at2759"/>
<dbReference type="PhylomeDB" id="Q2HZ96"/>
<dbReference type="Reactome" id="R-GGA-2173795">
    <property type="pathway name" value="Downregulation of SMAD2/3:SMAD4 transcriptional activity"/>
</dbReference>
<dbReference type="PRO" id="PR:Q2HZ96"/>
<dbReference type="Proteomes" id="UP000000539">
    <property type="component" value="Chromosome 4"/>
</dbReference>
<dbReference type="Bgee" id="ENSGALG00000008593">
    <property type="expression patterns" value="Expressed in muscle tissue and 11 other cell types or tissues"/>
</dbReference>
<dbReference type="GO" id="GO:0005637">
    <property type="term" value="C:nuclear inner membrane"/>
    <property type="evidence" value="ECO:0000318"/>
    <property type="project" value="GO_Central"/>
</dbReference>
<dbReference type="GO" id="GO:0005890">
    <property type="term" value="C:sodium:potassium-exchanging ATPase complex"/>
    <property type="evidence" value="ECO:0007669"/>
    <property type="project" value="InterPro"/>
</dbReference>
<dbReference type="GO" id="GO:0006813">
    <property type="term" value="P:potassium ion transport"/>
    <property type="evidence" value="ECO:0007669"/>
    <property type="project" value="InterPro"/>
</dbReference>
<dbReference type="GO" id="GO:1902600">
    <property type="term" value="P:proton transmembrane transport"/>
    <property type="evidence" value="ECO:0007669"/>
    <property type="project" value="UniProtKB-KW"/>
</dbReference>
<dbReference type="GO" id="GO:0006355">
    <property type="term" value="P:regulation of DNA-templated transcription"/>
    <property type="evidence" value="ECO:0000318"/>
    <property type="project" value="GO_Central"/>
</dbReference>
<dbReference type="GO" id="GO:0006814">
    <property type="term" value="P:sodium ion transport"/>
    <property type="evidence" value="ECO:0007669"/>
    <property type="project" value="InterPro"/>
</dbReference>
<dbReference type="FunFam" id="1.20.5.170:FF:000061">
    <property type="entry name" value="Sodium/potassium-transporting ATPase subunit beta"/>
    <property type="match status" value="1"/>
</dbReference>
<dbReference type="FunFam" id="2.60.40.1660:FF:000007">
    <property type="entry name" value="Sodium/potassium-transporting ATPase subunit beta"/>
    <property type="match status" value="1"/>
</dbReference>
<dbReference type="Gene3D" id="1.20.5.170">
    <property type="match status" value="1"/>
</dbReference>
<dbReference type="Gene3D" id="2.60.40.1660">
    <property type="entry name" value="Na, k-atpase alpha subunit"/>
    <property type="match status" value="1"/>
</dbReference>
<dbReference type="InterPro" id="IPR000402">
    <property type="entry name" value="Na/K_ATPase_sub_beta"/>
</dbReference>
<dbReference type="InterPro" id="IPR038702">
    <property type="entry name" value="Na/K_ATPase_sub_beta_sf"/>
</dbReference>
<dbReference type="NCBIfam" id="TIGR01107">
    <property type="entry name" value="Na_K_ATPase_bet"/>
    <property type="match status" value="1"/>
</dbReference>
<dbReference type="PANTHER" id="PTHR11523:SF12">
    <property type="entry name" value="PROTEIN ATP1B4"/>
    <property type="match status" value="1"/>
</dbReference>
<dbReference type="PANTHER" id="PTHR11523">
    <property type="entry name" value="SODIUM/POTASSIUM-DEPENDENT ATPASE BETA SUBUNIT"/>
    <property type="match status" value="1"/>
</dbReference>
<dbReference type="Pfam" id="PF00287">
    <property type="entry name" value="Na_K-ATPase"/>
    <property type="match status" value="1"/>
</dbReference>
<dbReference type="PROSITE" id="PS00390">
    <property type="entry name" value="ATPASE_NA_K_BETA_1"/>
    <property type="match status" value="1"/>
</dbReference>
<dbReference type="PROSITE" id="PS00391">
    <property type="entry name" value="ATPASE_NA_K_BETA_2"/>
    <property type="match status" value="1"/>
</dbReference>
<organism>
    <name type="scientific">Gallus gallus</name>
    <name type="common">Chicken</name>
    <dbReference type="NCBI Taxonomy" id="9031"/>
    <lineage>
        <taxon>Eukaryota</taxon>
        <taxon>Metazoa</taxon>
        <taxon>Chordata</taxon>
        <taxon>Craniata</taxon>
        <taxon>Vertebrata</taxon>
        <taxon>Euteleostomi</taxon>
        <taxon>Archelosauria</taxon>
        <taxon>Archosauria</taxon>
        <taxon>Dinosauria</taxon>
        <taxon>Saurischia</taxon>
        <taxon>Theropoda</taxon>
        <taxon>Coelurosauria</taxon>
        <taxon>Aves</taxon>
        <taxon>Neognathae</taxon>
        <taxon>Galloanserae</taxon>
        <taxon>Galliformes</taxon>
        <taxon>Phasianidae</taxon>
        <taxon>Phasianinae</taxon>
        <taxon>Gallus</taxon>
    </lineage>
</organism>
<feature type="chain" id="PRO_0000393964" description="Protein ATP1B4">
    <location>
        <begin position="1"/>
        <end position="321"/>
    </location>
</feature>
<feature type="topological domain" description="Cytoplasmic" evidence="2">
    <location>
        <begin position="1"/>
        <end position="72"/>
    </location>
</feature>
<feature type="transmembrane region" description="Helical" evidence="2">
    <location>
        <begin position="73"/>
        <end position="93"/>
    </location>
</feature>
<feature type="topological domain" description="Extracellular" evidence="2">
    <location>
        <begin position="94"/>
        <end position="321"/>
    </location>
</feature>
<feature type="region of interest" description="Disordered" evidence="3">
    <location>
        <begin position="1"/>
        <end position="41"/>
    </location>
</feature>
<feature type="compositionally biased region" description="Basic and acidic residues" evidence="3">
    <location>
        <begin position="14"/>
        <end position="41"/>
    </location>
</feature>
<feature type="glycosylation site" description="N-linked (GlcNAc...) asparagine" evidence="2">
    <location>
        <position position="132"/>
    </location>
</feature>
<feature type="glycosylation site" description="N-linked (GlcNAc...) asparagine" evidence="2">
    <location>
        <position position="176"/>
    </location>
</feature>
<feature type="glycosylation site" description="N-linked (GlcNAc...) asparagine" evidence="2">
    <location>
        <position position="193"/>
    </location>
</feature>
<feature type="glycosylation site" description="N-linked (GlcNAc...) asparagine" evidence="2">
    <location>
        <position position="239"/>
    </location>
</feature>
<feature type="glycosylation site" description="N-linked (GlcNAc...) asparagine" evidence="2">
    <location>
        <position position="252"/>
    </location>
</feature>
<feature type="glycosylation site" description="N-linked (GlcNAc...) asparagine" evidence="2">
    <location>
        <position position="270"/>
    </location>
</feature>
<feature type="disulfide bond" evidence="1">
    <location>
        <begin position="165"/>
        <end position="184"/>
    </location>
</feature>
<feature type="disulfide bond" evidence="1">
    <location>
        <begin position="194"/>
        <end position="210"/>
    </location>
</feature>
<feature type="disulfide bond" evidence="1">
    <location>
        <begin position="233"/>
        <end position="293"/>
    </location>
</feature>
<comment type="function">
    <text evidence="4">This is the non-catalytic component of the active enzyme, which catalyzes the hydrolysis of ATP coupled with the exchange of Na(+) and K(+) ions across the plasma membrane.</text>
</comment>
<comment type="subunit">
    <text evidence="4">Composed of two subunits: alpha (catalytic) and beta (accessory).</text>
</comment>
<comment type="subcellular location">
    <subcellularLocation>
        <location evidence="5">Membrane</location>
        <topology evidence="5">Single-pass type II membrane protein</topology>
    </subcellularLocation>
</comment>
<comment type="tissue specificity">
    <text evidence="4">Expressed in skeletal muscle, intestine, heart, brain, retina, inner ear and skin.</text>
</comment>
<comment type="developmental stage">
    <text>Expressed in embryo in skeletal muscle, heart, brain, retina, inner ear and skin at 19 dpc.</text>
</comment>
<comment type="PTM">
    <text evidence="4">Glycosylated.</text>
</comment>
<comment type="miscellaneous">
    <text>Its function as a Na,K-ATPase beta-subunit will be lost in placental mammals.</text>
</comment>
<comment type="similarity">
    <text evidence="5">Belongs to the X(+)/potassium ATPases subunit beta family.</text>
</comment>
<accession>Q2HZ96</accession>
<evidence type="ECO:0000250" key="1"/>
<evidence type="ECO:0000255" key="2"/>
<evidence type="ECO:0000256" key="3">
    <source>
        <dbReference type="SAM" id="MobiDB-lite"/>
    </source>
</evidence>
<evidence type="ECO:0000269" key="4">
    <source>
    </source>
</evidence>
<evidence type="ECO:0000305" key="5"/>
<protein>
    <recommendedName>
        <fullName>Protein ATP1B4</fullName>
    </recommendedName>
    <alternativeName>
        <fullName>X,K-ATPase subunit beta-m</fullName>
    </alternativeName>
    <alternativeName>
        <fullName>X/potassium-transporting ATPase subunit beta-m</fullName>
    </alternativeName>
</protein>
<reference key="1">
    <citation type="journal article" date="2007" name="Proc. Natl. Acad. Sci. U.S.A.">
        <title>Evolution of Na,K-ATPase betam-subunit into a coregulator of transcription in placental mammals.</title>
        <authorList>
            <person name="Pestov N.B."/>
            <person name="Ahmad N."/>
            <person name="Korneenko T.V."/>
            <person name="Zhao H."/>
            <person name="Radkov R."/>
            <person name="Schaer D."/>
            <person name="Roy S."/>
            <person name="Bibert S."/>
            <person name="Geering K."/>
            <person name="Modyanov N.N."/>
        </authorList>
    </citation>
    <scope>NUCLEOTIDE SEQUENCE [MRNA]</scope>
    <scope>FUNCTION</scope>
    <scope>SUBUNIT</scope>
    <scope>GLYCOSYLATION</scope>
    <scope>TISSUE SPECIFICITY</scope>
    <source>
        <tissue>Skeletal muscle</tissue>
    </source>
</reference>
<gene>
    <name type="primary">ATP1B4</name>
</gene>